<organism>
    <name type="scientific">Cyanothece sp. (strain PCC 7425 / ATCC 29141)</name>
    <dbReference type="NCBI Taxonomy" id="395961"/>
    <lineage>
        <taxon>Bacteria</taxon>
        <taxon>Bacillati</taxon>
        <taxon>Cyanobacteriota</taxon>
        <taxon>Cyanophyceae</taxon>
        <taxon>Gomontiellales</taxon>
        <taxon>Cyanothecaceae</taxon>
        <taxon>Cyanothece</taxon>
    </lineage>
</organism>
<reference key="1">
    <citation type="journal article" date="2011" name="MBio">
        <title>Novel metabolic attributes of the genus Cyanothece, comprising a group of unicellular nitrogen-fixing Cyanobacteria.</title>
        <authorList>
            <person name="Bandyopadhyay A."/>
            <person name="Elvitigala T."/>
            <person name="Welsh E."/>
            <person name="Stockel J."/>
            <person name="Liberton M."/>
            <person name="Min H."/>
            <person name="Sherman L.A."/>
            <person name="Pakrasi H.B."/>
        </authorList>
    </citation>
    <scope>NUCLEOTIDE SEQUENCE [LARGE SCALE GENOMIC DNA]</scope>
    <source>
        <strain>PCC 7425 / ATCC 29141</strain>
    </source>
</reference>
<feature type="chain" id="PRO_1000201016" description="Glutamate-1-semialdehyde 2,1-aminomutase">
    <location>
        <begin position="1"/>
        <end position="432"/>
    </location>
</feature>
<feature type="modified residue" description="N6-(pyridoxal phosphate)lysine" evidence="1">
    <location>
        <position position="272"/>
    </location>
</feature>
<comment type="catalytic activity">
    <reaction evidence="1">
        <text>(S)-4-amino-5-oxopentanoate = 5-aminolevulinate</text>
        <dbReference type="Rhea" id="RHEA:14265"/>
        <dbReference type="ChEBI" id="CHEBI:57501"/>
        <dbReference type="ChEBI" id="CHEBI:356416"/>
        <dbReference type="EC" id="5.4.3.8"/>
    </reaction>
</comment>
<comment type="cofactor">
    <cofactor evidence="1">
        <name>pyridoxal 5'-phosphate</name>
        <dbReference type="ChEBI" id="CHEBI:597326"/>
    </cofactor>
</comment>
<comment type="pathway">
    <text evidence="1">Porphyrin-containing compound metabolism; protoporphyrin-IX biosynthesis; 5-aminolevulinate from L-glutamyl-tRNA(Glu): step 2/2.</text>
</comment>
<comment type="pathway">
    <text evidence="1">Porphyrin-containing compound metabolism; chlorophyll biosynthesis.</text>
</comment>
<comment type="subunit">
    <text evidence="1">Homodimer.</text>
</comment>
<comment type="subcellular location">
    <subcellularLocation>
        <location evidence="1">Cytoplasm</location>
    </subcellularLocation>
</comment>
<comment type="similarity">
    <text evidence="1">Belongs to the class-III pyridoxal-phosphate-dependent aminotransferase family. HemL subfamily.</text>
</comment>
<name>GSA_CYAP4</name>
<accession>B8HYK1</accession>
<dbReference type="EC" id="5.4.3.8" evidence="1"/>
<dbReference type="EMBL" id="CP001344">
    <property type="protein sequence ID" value="ACL46655.1"/>
    <property type="molecule type" value="Genomic_DNA"/>
</dbReference>
<dbReference type="SMR" id="B8HYK1"/>
<dbReference type="STRING" id="395961.Cyan7425_4345"/>
<dbReference type="KEGG" id="cyn:Cyan7425_4345"/>
<dbReference type="eggNOG" id="COG0001">
    <property type="taxonomic scope" value="Bacteria"/>
</dbReference>
<dbReference type="HOGENOM" id="CLU_016922_1_5_3"/>
<dbReference type="OrthoDB" id="9807885at2"/>
<dbReference type="UniPathway" id="UPA00251">
    <property type="reaction ID" value="UER00317"/>
</dbReference>
<dbReference type="UniPathway" id="UPA00668"/>
<dbReference type="GO" id="GO:0005737">
    <property type="term" value="C:cytoplasm"/>
    <property type="evidence" value="ECO:0007669"/>
    <property type="project" value="UniProtKB-SubCell"/>
</dbReference>
<dbReference type="GO" id="GO:0042286">
    <property type="term" value="F:glutamate-1-semialdehyde 2,1-aminomutase activity"/>
    <property type="evidence" value="ECO:0007669"/>
    <property type="project" value="UniProtKB-UniRule"/>
</dbReference>
<dbReference type="GO" id="GO:0030170">
    <property type="term" value="F:pyridoxal phosphate binding"/>
    <property type="evidence" value="ECO:0007669"/>
    <property type="project" value="InterPro"/>
</dbReference>
<dbReference type="GO" id="GO:0008483">
    <property type="term" value="F:transaminase activity"/>
    <property type="evidence" value="ECO:0007669"/>
    <property type="project" value="InterPro"/>
</dbReference>
<dbReference type="GO" id="GO:0015995">
    <property type="term" value="P:chlorophyll biosynthetic process"/>
    <property type="evidence" value="ECO:0007669"/>
    <property type="project" value="UniProtKB-UniPathway"/>
</dbReference>
<dbReference type="GO" id="GO:0006782">
    <property type="term" value="P:protoporphyrinogen IX biosynthetic process"/>
    <property type="evidence" value="ECO:0007669"/>
    <property type="project" value="UniProtKB-UniRule"/>
</dbReference>
<dbReference type="CDD" id="cd00610">
    <property type="entry name" value="OAT_like"/>
    <property type="match status" value="1"/>
</dbReference>
<dbReference type="FunFam" id="3.40.640.10:FF:000021">
    <property type="entry name" value="Glutamate-1-semialdehyde 2,1-aminomutase"/>
    <property type="match status" value="1"/>
</dbReference>
<dbReference type="FunFam" id="3.90.1150.10:FF:000012">
    <property type="entry name" value="Glutamate-1-semialdehyde 2,1-aminomutase"/>
    <property type="match status" value="1"/>
</dbReference>
<dbReference type="Gene3D" id="3.90.1150.10">
    <property type="entry name" value="Aspartate Aminotransferase, domain 1"/>
    <property type="match status" value="1"/>
</dbReference>
<dbReference type="Gene3D" id="3.40.640.10">
    <property type="entry name" value="Type I PLP-dependent aspartate aminotransferase-like (Major domain)"/>
    <property type="match status" value="1"/>
</dbReference>
<dbReference type="HAMAP" id="MF_00375">
    <property type="entry name" value="HemL_aminotrans_3"/>
    <property type="match status" value="1"/>
</dbReference>
<dbReference type="InterPro" id="IPR004639">
    <property type="entry name" value="4pyrrol_synth_GluAld_NH2Trfase"/>
</dbReference>
<dbReference type="InterPro" id="IPR005814">
    <property type="entry name" value="Aminotrans_3"/>
</dbReference>
<dbReference type="InterPro" id="IPR049704">
    <property type="entry name" value="Aminotrans_3_PPA_site"/>
</dbReference>
<dbReference type="InterPro" id="IPR015424">
    <property type="entry name" value="PyrdxlP-dep_Trfase"/>
</dbReference>
<dbReference type="InterPro" id="IPR015421">
    <property type="entry name" value="PyrdxlP-dep_Trfase_major"/>
</dbReference>
<dbReference type="InterPro" id="IPR015422">
    <property type="entry name" value="PyrdxlP-dep_Trfase_small"/>
</dbReference>
<dbReference type="NCBIfam" id="TIGR00713">
    <property type="entry name" value="hemL"/>
    <property type="match status" value="1"/>
</dbReference>
<dbReference type="NCBIfam" id="NF000818">
    <property type="entry name" value="PRK00062.1"/>
    <property type="match status" value="1"/>
</dbReference>
<dbReference type="PANTHER" id="PTHR43713">
    <property type="entry name" value="GLUTAMATE-1-SEMIALDEHYDE 2,1-AMINOMUTASE"/>
    <property type="match status" value="1"/>
</dbReference>
<dbReference type="PANTHER" id="PTHR43713:SF3">
    <property type="entry name" value="GLUTAMATE-1-SEMIALDEHYDE 2,1-AMINOMUTASE 1, CHLOROPLASTIC-RELATED"/>
    <property type="match status" value="1"/>
</dbReference>
<dbReference type="Pfam" id="PF00202">
    <property type="entry name" value="Aminotran_3"/>
    <property type="match status" value="1"/>
</dbReference>
<dbReference type="SUPFAM" id="SSF53383">
    <property type="entry name" value="PLP-dependent transferases"/>
    <property type="match status" value="1"/>
</dbReference>
<dbReference type="PROSITE" id="PS00600">
    <property type="entry name" value="AA_TRANSFER_CLASS_3"/>
    <property type="match status" value="1"/>
</dbReference>
<sequence length="432" mass="45811">MLTSTFNTTKSEEIFAAAQKLMPGGVNSPVRAFKSVGGNPIVFDRVEGAYVWDVDGNQYIDYVGSWGPAICGHAHPEVIKALHAALDKGTSFGAPCLLENVLAEMVIDGVPSIEMVRFVNSGTEACMAILRLMRAYTGREKIIKFEGCYHGHADMFLVKAGSGVATLGLPDSPGVPKSVTANTLTAPFNDLEAVKALFADHPDQIAGVILEPVVGNAGFIPPDGGFLAGLREITQEQGALLVFDEVMTGFRIAYGGAQEKFGVLPDLTTLGKIIGGGLPVGAYGGRREIMSLVAPAGPMYQAGTLSGNPLAMTAGIKTLELIRQTGTYEYLDQITAKLINGLLTIAREAGHQVCGGHISGMFGLFFTAGPVHNYEDAKKSDLAKFSAFHRGMLEQGVYLAPSQFEAGFTSLAHTEADIDRTLEAARVVLNQL</sequence>
<keyword id="KW-0149">Chlorophyll biosynthesis</keyword>
<keyword id="KW-0963">Cytoplasm</keyword>
<keyword id="KW-0413">Isomerase</keyword>
<keyword id="KW-0627">Porphyrin biosynthesis</keyword>
<keyword id="KW-0663">Pyridoxal phosphate</keyword>
<proteinExistence type="inferred from homology"/>
<gene>
    <name evidence="1" type="primary">hemL</name>
    <name type="ordered locus">Cyan7425_4345</name>
</gene>
<protein>
    <recommendedName>
        <fullName evidence="1">Glutamate-1-semialdehyde 2,1-aminomutase</fullName>
        <shortName evidence="1">GSA</shortName>
        <ecNumber evidence="1">5.4.3.8</ecNumber>
    </recommendedName>
    <alternativeName>
        <fullName evidence="1">Glutamate-1-semialdehyde aminotransferase</fullName>
        <shortName evidence="1">GSA-AT</shortName>
    </alternativeName>
</protein>
<evidence type="ECO:0000255" key="1">
    <source>
        <dbReference type="HAMAP-Rule" id="MF_00375"/>
    </source>
</evidence>